<gene>
    <name evidence="4" type="primary">MST5</name>
    <name evidence="7" type="ordered locus">Os08g0178200</name>
    <name evidence="5" type="ordered locus">LOC_Os08g08070</name>
    <name evidence="6" type="ORF">OJ1120_C08.22</name>
    <name evidence="8" type="ORF">OsJ_26248</name>
</gene>
<sequence>MAGGAMVQTVGGKTYPGKMTAFVFFTCLVASSGGLIFGYDIGISGGVTSMDSFLSEFFPSVYAQAKASKDTNQYCKFDSQLLTLFTSSLYLAALATSFVAAWVTRVFGRKWSMFCGGVTFLAGSALNGAATDVMMLILGRILLGIGVGFANQSVPLYLSEMAPANLRGMLNIGFQLMTTIGILSANLINYATSSIEGGWGWRIGLGLAGVPALIITLGALVLPDTPNSLIARGYAGDAKRVLVKIRGTDDVHDEYDDMVAASEEAASIEHPWRNILHRKYRPQLTIAILIPCFQQLTGINVIMFYAPVLFLTIGFAGDASLMSAVITGLVNMFATVVSIISVDRLGRRVLFLQGGTQMFISQVVVGTLIALQFGVAGVGEMSRSYAILLVLFICMYVAGFAWSWGPLGWLVPSEVFALEIRSAGQSIAVCVNMMLTFVIGQAFLTMLCHLKFGLFYFFAGWMLVMTTFVALFLPETKGVPIEEMNHVWSRHWFWGSYVTAHDVAGAGAGGGGNRRSHNV</sequence>
<feature type="chain" id="PRO_0000441039" description="Sugar transport protein MST5">
    <location>
        <begin position="1"/>
        <end position="519"/>
    </location>
</feature>
<feature type="topological domain" description="Cytoplasmic" evidence="5">
    <location>
        <begin position="1"/>
        <end position="18"/>
    </location>
</feature>
<feature type="transmembrane region" description="Helical" evidence="1">
    <location>
        <begin position="19"/>
        <end position="39"/>
    </location>
</feature>
<feature type="topological domain" description="Extracellular" evidence="5">
    <location>
        <begin position="40"/>
        <end position="80"/>
    </location>
</feature>
<feature type="transmembrane region" description="Helical" evidence="1">
    <location>
        <begin position="81"/>
        <end position="101"/>
    </location>
</feature>
<feature type="topological domain" description="Cytoplasmic" evidence="5">
    <location>
        <begin position="102"/>
        <end position="110"/>
    </location>
</feature>
<feature type="transmembrane region" description="Helical" evidence="1">
    <location>
        <begin position="111"/>
        <end position="127"/>
    </location>
</feature>
<feature type="topological domain" description="Extracellular" evidence="5">
    <location>
        <position position="128"/>
    </location>
</feature>
<feature type="transmembrane region" description="Helical" evidence="1">
    <location>
        <begin position="129"/>
        <end position="149"/>
    </location>
</feature>
<feature type="topological domain" description="Cytoplasmic" evidence="5">
    <location>
        <begin position="150"/>
        <end position="167"/>
    </location>
</feature>
<feature type="transmembrane region" description="Helical" evidence="1">
    <location>
        <begin position="168"/>
        <end position="188"/>
    </location>
</feature>
<feature type="topological domain" description="Extracellular" evidence="5">
    <location>
        <begin position="189"/>
        <end position="202"/>
    </location>
</feature>
<feature type="transmembrane region" description="Helical" evidence="1">
    <location>
        <begin position="203"/>
        <end position="223"/>
    </location>
</feature>
<feature type="topological domain" description="Cytoplasmic" evidence="5">
    <location>
        <begin position="224"/>
        <end position="295"/>
    </location>
</feature>
<feature type="transmembrane region" description="Helical" evidence="1">
    <location>
        <begin position="296"/>
        <end position="316"/>
    </location>
</feature>
<feature type="topological domain" description="Extracellular" evidence="5">
    <location>
        <begin position="317"/>
        <end position="321"/>
    </location>
</feature>
<feature type="transmembrane region" description="Helical" evidence="1">
    <location>
        <begin position="322"/>
        <end position="342"/>
    </location>
</feature>
<feature type="topological domain" description="Cytoplasmic" evidence="5">
    <location>
        <begin position="343"/>
        <end position="357"/>
    </location>
</feature>
<feature type="transmembrane region" description="Helical" evidence="1">
    <location>
        <begin position="358"/>
        <end position="378"/>
    </location>
</feature>
<feature type="topological domain" description="Extracellular" evidence="5">
    <location>
        <begin position="379"/>
        <end position="386"/>
    </location>
</feature>
<feature type="transmembrane region" description="Helical" evidence="1">
    <location>
        <begin position="387"/>
        <end position="407"/>
    </location>
</feature>
<feature type="topological domain" description="Cytoplasmic" evidence="5">
    <location>
        <begin position="408"/>
        <end position="426"/>
    </location>
</feature>
<feature type="transmembrane region" description="Helical" evidence="1">
    <location>
        <begin position="427"/>
        <end position="447"/>
    </location>
</feature>
<feature type="topological domain" description="Extracellular" evidence="5">
    <location>
        <begin position="448"/>
        <end position="451"/>
    </location>
</feature>
<feature type="transmembrane region" description="Helical" evidence="1">
    <location>
        <begin position="452"/>
        <end position="472"/>
    </location>
</feature>
<feature type="topological domain" description="Cytoplasmic" evidence="5">
    <location>
        <begin position="473"/>
        <end position="519"/>
    </location>
</feature>
<reference key="1">
    <citation type="journal article" date="2005" name="Nature">
        <title>The map-based sequence of the rice genome.</title>
        <authorList>
            <consortium name="International rice genome sequencing project (IRGSP)"/>
        </authorList>
    </citation>
    <scope>NUCLEOTIDE SEQUENCE [LARGE SCALE GENOMIC DNA]</scope>
    <source>
        <strain>cv. Nipponbare</strain>
    </source>
</reference>
<reference key="2">
    <citation type="journal article" date="2008" name="Nucleic Acids Res.">
        <title>The rice annotation project database (RAP-DB): 2008 update.</title>
        <authorList>
            <consortium name="The rice annotation project (RAP)"/>
        </authorList>
    </citation>
    <scope>GENOME REANNOTATION</scope>
    <source>
        <strain>cv. Nipponbare</strain>
    </source>
</reference>
<reference key="3">
    <citation type="journal article" date="2013" name="Rice">
        <title>Improvement of the Oryza sativa Nipponbare reference genome using next generation sequence and optical map data.</title>
        <authorList>
            <person name="Kawahara Y."/>
            <person name="de la Bastide M."/>
            <person name="Hamilton J.P."/>
            <person name="Kanamori H."/>
            <person name="McCombie W.R."/>
            <person name="Ouyang S."/>
            <person name="Schwartz D.C."/>
            <person name="Tanaka T."/>
            <person name="Wu J."/>
            <person name="Zhou S."/>
            <person name="Childs K.L."/>
            <person name="Davidson R.M."/>
            <person name="Lin H."/>
            <person name="Quesada-Ocampo L."/>
            <person name="Vaillancourt B."/>
            <person name="Sakai H."/>
            <person name="Lee S.S."/>
            <person name="Kim J."/>
            <person name="Numa H."/>
            <person name="Itoh T."/>
            <person name="Buell C.R."/>
            <person name="Matsumoto T."/>
        </authorList>
    </citation>
    <scope>GENOME REANNOTATION</scope>
    <source>
        <strain>cv. Nipponbare</strain>
    </source>
</reference>
<reference key="4">
    <citation type="journal article" date="2003" name="Science">
        <title>Collection, mapping, and annotation of over 28,000 cDNA clones from japonica rice.</title>
        <authorList>
            <consortium name="The rice full-length cDNA consortium"/>
        </authorList>
    </citation>
    <scope>NUCLEOTIDE SEQUENCE [LARGE SCALE MRNA]</scope>
    <source>
        <strain>cv. Nipponbare</strain>
    </source>
</reference>
<reference key="5">
    <citation type="journal article" date="2001" name="Plant Cell Physiol.">
        <title>Sugar transporters involved in flowering and grain development of rice.</title>
        <authorList>
            <person name="Takeda T."/>
            <person name="Toyofuku K."/>
            <person name="Matsukura C."/>
            <person name="Yamaguchi J."/>
        </authorList>
    </citation>
    <scope>FUNCTION</scope>
</reference>
<reference key="6">
    <citation type="journal article" date="2003" name="Biosci. Biotechnol. Biochem.">
        <title>Characterization of rice functional monosaccharide transporter, OsMST5.</title>
        <authorList>
            <person name="Ngampanya B."/>
            <person name="Sobolewska A."/>
            <person name="Takeda T."/>
            <person name="Toyofuku K."/>
            <person name="Narangajavana J."/>
            <person name="Ikeda A."/>
            <person name="Yamaguchi J."/>
        </authorList>
    </citation>
    <scope>FUNCTION</scope>
    <scope>TISSUE SPECIFICITY</scope>
</reference>
<evidence type="ECO:0000255" key="1"/>
<evidence type="ECO:0000269" key="2">
    <source>
    </source>
</evidence>
<evidence type="ECO:0000269" key="3">
    <source ref="5"/>
</evidence>
<evidence type="ECO:0000303" key="4">
    <source>
    </source>
</evidence>
<evidence type="ECO:0000305" key="5"/>
<evidence type="ECO:0000312" key="6">
    <source>
        <dbReference type="EMBL" id="BAD03049.1"/>
    </source>
</evidence>
<evidence type="ECO:0000312" key="7">
    <source>
        <dbReference type="EMBL" id="BAF23041.1"/>
    </source>
</evidence>
<evidence type="ECO:0000312" key="8">
    <source>
        <dbReference type="EMBL" id="EAZ41712.1"/>
    </source>
</evidence>
<protein>
    <recommendedName>
        <fullName evidence="5">Sugar transport protein MST5</fullName>
    </recommendedName>
    <alternativeName>
        <fullName evidence="4">Monosaccharide transporter 5</fullName>
        <shortName evidence="4">OsMST5</shortName>
    </alternativeName>
    <alternativeName>
        <fullName evidence="5">Sugar:proton symporter MST5</fullName>
    </alternativeName>
</protein>
<dbReference type="EMBL" id="AP003878">
    <property type="protein sequence ID" value="BAD03049.1"/>
    <property type="molecule type" value="Genomic_DNA"/>
</dbReference>
<dbReference type="EMBL" id="AP008214">
    <property type="protein sequence ID" value="BAF23041.1"/>
    <property type="molecule type" value="Genomic_DNA"/>
</dbReference>
<dbReference type="EMBL" id="AP014964">
    <property type="protein sequence ID" value="BAT04087.1"/>
    <property type="molecule type" value="Genomic_DNA"/>
</dbReference>
<dbReference type="EMBL" id="CM000145">
    <property type="protein sequence ID" value="EAZ41712.1"/>
    <property type="molecule type" value="Genomic_DNA"/>
</dbReference>
<dbReference type="EMBL" id="AK070877">
    <property type="protein sequence ID" value="BAG92188.1"/>
    <property type="molecule type" value="mRNA"/>
</dbReference>
<dbReference type="RefSeq" id="XP_015650673.1">
    <property type="nucleotide sequence ID" value="XM_015795187.1"/>
</dbReference>
<dbReference type="SMR" id="Q6ZKF0"/>
<dbReference type="FunCoup" id="Q6ZKF0">
    <property type="interactions" value="196"/>
</dbReference>
<dbReference type="STRING" id="39947.Q6ZKF0"/>
<dbReference type="PaxDb" id="39947-Q6ZKF0"/>
<dbReference type="EnsemblPlants" id="Os08t0178200-02">
    <property type="protein sequence ID" value="Os08t0178200-02"/>
    <property type="gene ID" value="Os08g0178200"/>
</dbReference>
<dbReference type="Gramene" id="Os08t0178200-02">
    <property type="protein sequence ID" value="Os08t0178200-02"/>
    <property type="gene ID" value="Os08g0178200"/>
</dbReference>
<dbReference type="KEGG" id="dosa:Os08g0178200"/>
<dbReference type="eggNOG" id="KOG0254">
    <property type="taxonomic scope" value="Eukaryota"/>
</dbReference>
<dbReference type="HOGENOM" id="CLU_001265_30_5_1"/>
<dbReference type="InParanoid" id="Q6ZKF0"/>
<dbReference type="OMA" id="WDMERAY"/>
<dbReference type="OrthoDB" id="5296287at2759"/>
<dbReference type="Proteomes" id="UP000000763">
    <property type="component" value="Chromosome 8"/>
</dbReference>
<dbReference type="Proteomes" id="UP000007752">
    <property type="component" value="Chromosome 8"/>
</dbReference>
<dbReference type="Proteomes" id="UP000059680">
    <property type="component" value="Chromosome 8"/>
</dbReference>
<dbReference type="GO" id="GO:0016020">
    <property type="term" value="C:membrane"/>
    <property type="evidence" value="ECO:0007669"/>
    <property type="project" value="UniProtKB-SubCell"/>
</dbReference>
<dbReference type="GO" id="GO:0015145">
    <property type="term" value="F:monosaccharide transmembrane transporter activity"/>
    <property type="evidence" value="ECO:0007669"/>
    <property type="project" value="InterPro"/>
</dbReference>
<dbReference type="GO" id="GO:0015293">
    <property type="term" value="F:symporter activity"/>
    <property type="evidence" value="ECO:0007669"/>
    <property type="project" value="UniProtKB-KW"/>
</dbReference>
<dbReference type="CDD" id="cd17361">
    <property type="entry name" value="MFS_STP"/>
    <property type="match status" value="1"/>
</dbReference>
<dbReference type="FunFam" id="1.20.1250.20:FF:000002">
    <property type="entry name" value="Sugar transport protein 13"/>
    <property type="match status" value="1"/>
</dbReference>
<dbReference type="Gene3D" id="1.20.1250.20">
    <property type="entry name" value="MFS general substrate transporter like domains"/>
    <property type="match status" value="1"/>
</dbReference>
<dbReference type="InterPro" id="IPR020846">
    <property type="entry name" value="MFS_dom"/>
</dbReference>
<dbReference type="InterPro" id="IPR044778">
    <property type="entry name" value="MFS_STP/MST-like_plant"/>
</dbReference>
<dbReference type="InterPro" id="IPR005828">
    <property type="entry name" value="MFS_sugar_transport-like"/>
</dbReference>
<dbReference type="InterPro" id="IPR036259">
    <property type="entry name" value="MFS_trans_sf"/>
</dbReference>
<dbReference type="InterPro" id="IPR045262">
    <property type="entry name" value="STP/PLT_plant"/>
</dbReference>
<dbReference type="InterPro" id="IPR003663">
    <property type="entry name" value="Sugar/inositol_transpt"/>
</dbReference>
<dbReference type="InterPro" id="IPR005829">
    <property type="entry name" value="Sugar_transporter_CS"/>
</dbReference>
<dbReference type="NCBIfam" id="TIGR00879">
    <property type="entry name" value="SP"/>
    <property type="match status" value="1"/>
</dbReference>
<dbReference type="PANTHER" id="PTHR23500">
    <property type="entry name" value="SOLUTE CARRIER FAMILY 2, FACILITATED GLUCOSE TRANSPORTER"/>
    <property type="match status" value="1"/>
</dbReference>
<dbReference type="PANTHER" id="PTHR23500:SF74">
    <property type="entry name" value="SUGAR TRANSPORT PROTEIN MST5"/>
    <property type="match status" value="1"/>
</dbReference>
<dbReference type="Pfam" id="PF00083">
    <property type="entry name" value="Sugar_tr"/>
    <property type="match status" value="1"/>
</dbReference>
<dbReference type="PRINTS" id="PR00171">
    <property type="entry name" value="SUGRTRNSPORT"/>
</dbReference>
<dbReference type="SUPFAM" id="SSF103473">
    <property type="entry name" value="MFS general substrate transporter"/>
    <property type="match status" value="1"/>
</dbReference>
<dbReference type="PROSITE" id="PS50850">
    <property type="entry name" value="MFS"/>
    <property type="match status" value="1"/>
</dbReference>
<dbReference type="PROSITE" id="PS00216">
    <property type="entry name" value="SUGAR_TRANSPORT_1"/>
    <property type="match status" value="1"/>
</dbReference>
<dbReference type="PROSITE" id="PS00217">
    <property type="entry name" value="SUGAR_TRANSPORT_2"/>
    <property type="match status" value="1"/>
</dbReference>
<name>MST5_ORYSJ</name>
<accession>Q6ZKF0</accession>
<organism>
    <name type="scientific">Oryza sativa subsp. japonica</name>
    <name type="common">Rice</name>
    <dbReference type="NCBI Taxonomy" id="39947"/>
    <lineage>
        <taxon>Eukaryota</taxon>
        <taxon>Viridiplantae</taxon>
        <taxon>Streptophyta</taxon>
        <taxon>Embryophyta</taxon>
        <taxon>Tracheophyta</taxon>
        <taxon>Spermatophyta</taxon>
        <taxon>Magnoliopsida</taxon>
        <taxon>Liliopsida</taxon>
        <taxon>Poales</taxon>
        <taxon>Poaceae</taxon>
        <taxon>BOP clade</taxon>
        <taxon>Oryzoideae</taxon>
        <taxon>Oryzeae</taxon>
        <taxon>Oryzinae</taxon>
        <taxon>Oryza</taxon>
        <taxon>Oryza sativa</taxon>
    </lineage>
</organism>
<keyword id="KW-0472">Membrane</keyword>
<keyword id="KW-1185">Reference proteome</keyword>
<keyword id="KW-0762">Sugar transport</keyword>
<keyword id="KW-0769">Symport</keyword>
<keyword id="KW-0812">Transmembrane</keyword>
<keyword id="KW-1133">Transmembrane helix</keyword>
<keyword id="KW-0813">Transport</keyword>
<comment type="function">
    <text evidence="2 3">Mediates active uptake of hexoses by sugar:proton symport. Can transport glucose, xylose and 3-O-methylglucose (PubMed:12723603). May play a role at the early stage of seed development (Ref.5).</text>
</comment>
<comment type="subcellular location">
    <subcellularLocation>
        <location evidence="1">Membrane</location>
        <topology evidence="1">Multi-pass membrane protein</topology>
    </subcellularLocation>
</comment>
<comment type="tissue specificity">
    <text evidence="2 3">Expressed in panicles before heading (PubMed:12723603). Expressed in flowers before pollination (Ref.5).</text>
</comment>
<comment type="similarity">
    <text evidence="5">Belongs to the major facilitator superfamily. Sugar transporter (TC 2.A.1.1) family.</text>
</comment>
<proteinExistence type="evidence at transcript level"/>